<sequence>MSLKTRYRETIRPKLLKDLGLKNVHQVPKVQKVTLNRGLGEAATNSKALEASLKEMATISGQKALVTRAKKAIATFKIRQGMPIGCAVTLRGDRMYAFLERFINLALPRIRDFRGVSPKSFDGRGNYTIGVKEQLIFPEITFDKVDTIRGMDITIVTSASSDEQGKALLSEMGMPFRKK</sequence>
<comment type="function">
    <text evidence="1">This is one of the proteins that bind and probably mediate the attachment of the 5S RNA into the large ribosomal subunit, where it forms part of the central protuberance. In the 70S ribosome it contacts protein S13 of the 30S subunit (bridge B1b), connecting the 2 subunits; this bridge is implicated in subunit movement. Contacts the P site tRNA; the 5S rRNA and some of its associated proteins might help stabilize positioning of ribosome-bound tRNAs.</text>
</comment>
<comment type="subunit">
    <text evidence="1">Part of the 50S ribosomal subunit; part of the 5S rRNA/L5/L18/L25 subcomplex. Contacts the 5S rRNA and the P site tRNA. Forms a bridge to the 30S subunit in the 70S ribosome.</text>
</comment>
<comment type="similarity">
    <text evidence="1">Belongs to the universal ribosomal protein uL5 family.</text>
</comment>
<accession>Q46IS1</accession>
<name>RL5_PROMT</name>
<proteinExistence type="inferred from homology"/>
<protein>
    <recommendedName>
        <fullName evidence="1">Large ribosomal subunit protein uL5</fullName>
    </recommendedName>
    <alternativeName>
        <fullName evidence="2">50S ribosomal protein L5</fullName>
    </alternativeName>
</protein>
<dbReference type="EMBL" id="CP000095">
    <property type="protein sequence ID" value="AAZ58607.1"/>
    <property type="molecule type" value="Genomic_DNA"/>
</dbReference>
<dbReference type="RefSeq" id="WP_011295461.1">
    <property type="nucleotide sequence ID" value="NC_007335.2"/>
</dbReference>
<dbReference type="SMR" id="Q46IS1"/>
<dbReference type="STRING" id="59920.PMN2A_1117"/>
<dbReference type="KEGG" id="pmn:PMN2A_1117"/>
<dbReference type="HOGENOM" id="CLU_061015_2_1_3"/>
<dbReference type="OrthoDB" id="9806626at2"/>
<dbReference type="PhylomeDB" id="Q46IS1"/>
<dbReference type="Proteomes" id="UP000002535">
    <property type="component" value="Chromosome"/>
</dbReference>
<dbReference type="GO" id="GO:1990904">
    <property type="term" value="C:ribonucleoprotein complex"/>
    <property type="evidence" value="ECO:0007669"/>
    <property type="project" value="UniProtKB-KW"/>
</dbReference>
<dbReference type="GO" id="GO:0005840">
    <property type="term" value="C:ribosome"/>
    <property type="evidence" value="ECO:0007669"/>
    <property type="project" value="UniProtKB-KW"/>
</dbReference>
<dbReference type="GO" id="GO:0019843">
    <property type="term" value="F:rRNA binding"/>
    <property type="evidence" value="ECO:0007669"/>
    <property type="project" value="UniProtKB-UniRule"/>
</dbReference>
<dbReference type="GO" id="GO:0003735">
    <property type="term" value="F:structural constituent of ribosome"/>
    <property type="evidence" value="ECO:0007669"/>
    <property type="project" value="InterPro"/>
</dbReference>
<dbReference type="GO" id="GO:0000049">
    <property type="term" value="F:tRNA binding"/>
    <property type="evidence" value="ECO:0007669"/>
    <property type="project" value="UniProtKB-UniRule"/>
</dbReference>
<dbReference type="GO" id="GO:0006412">
    <property type="term" value="P:translation"/>
    <property type="evidence" value="ECO:0007669"/>
    <property type="project" value="UniProtKB-UniRule"/>
</dbReference>
<dbReference type="FunFam" id="3.30.1440.10:FF:000001">
    <property type="entry name" value="50S ribosomal protein L5"/>
    <property type="match status" value="1"/>
</dbReference>
<dbReference type="Gene3D" id="3.30.1440.10">
    <property type="match status" value="1"/>
</dbReference>
<dbReference type="HAMAP" id="MF_01333_B">
    <property type="entry name" value="Ribosomal_uL5_B"/>
    <property type="match status" value="1"/>
</dbReference>
<dbReference type="InterPro" id="IPR002132">
    <property type="entry name" value="Ribosomal_uL5"/>
</dbReference>
<dbReference type="InterPro" id="IPR020930">
    <property type="entry name" value="Ribosomal_uL5_bac-type"/>
</dbReference>
<dbReference type="InterPro" id="IPR031309">
    <property type="entry name" value="Ribosomal_uL5_C"/>
</dbReference>
<dbReference type="InterPro" id="IPR020929">
    <property type="entry name" value="Ribosomal_uL5_CS"/>
</dbReference>
<dbReference type="InterPro" id="IPR022803">
    <property type="entry name" value="Ribosomal_uL5_dom_sf"/>
</dbReference>
<dbReference type="InterPro" id="IPR031310">
    <property type="entry name" value="Ribosomal_uL5_N"/>
</dbReference>
<dbReference type="NCBIfam" id="NF000585">
    <property type="entry name" value="PRK00010.1"/>
    <property type="match status" value="1"/>
</dbReference>
<dbReference type="PANTHER" id="PTHR11994">
    <property type="entry name" value="60S RIBOSOMAL PROTEIN L11-RELATED"/>
    <property type="match status" value="1"/>
</dbReference>
<dbReference type="Pfam" id="PF00281">
    <property type="entry name" value="Ribosomal_L5"/>
    <property type="match status" value="1"/>
</dbReference>
<dbReference type="Pfam" id="PF00673">
    <property type="entry name" value="Ribosomal_L5_C"/>
    <property type="match status" value="1"/>
</dbReference>
<dbReference type="PIRSF" id="PIRSF002161">
    <property type="entry name" value="Ribosomal_L5"/>
    <property type="match status" value="1"/>
</dbReference>
<dbReference type="SUPFAM" id="SSF55282">
    <property type="entry name" value="RL5-like"/>
    <property type="match status" value="1"/>
</dbReference>
<dbReference type="PROSITE" id="PS00358">
    <property type="entry name" value="RIBOSOMAL_L5"/>
    <property type="match status" value="1"/>
</dbReference>
<gene>
    <name evidence="1" type="primary">rplE</name>
    <name evidence="1" type="synonym">rpl5</name>
    <name type="ordered locus">PMN2A_1117</name>
</gene>
<reference key="1">
    <citation type="journal article" date="2007" name="PLoS Genet.">
        <title>Patterns and implications of gene gain and loss in the evolution of Prochlorococcus.</title>
        <authorList>
            <person name="Kettler G.C."/>
            <person name="Martiny A.C."/>
            <person name="Huang K."/>
            <person name="Zucker J."/>
            <person name="Coleman M.L."/>
            <person name="Rodrigue S."/>
            <person name="Chen F."/>
            <person name="Lapidus A."/>
            <person name="Ferriera S."/>
            <person name="Johnson J."/>
            <person name="Steglich C."/>
            <person name="Church G.M."/>
            <person name="Richardson P."/>
            <person name="Chisholm S.W."/>
        </authorList>
    </citation>
    <scope>NUCLEOTIDE SEQUENCE [LARGE SCALE GENOMIC DNA]</scope>
    <source>
        <strain>NATL2A</strain>
    </source>
</reference>
<organism>
    <name type="scientific">Prochlorococcus marinus (strain NATL2A)</name>
    <dbReference type="NCBI Taxonomy" id="59920"/>
    <lineage>
        <taxon>Bacteria</taxon>
        <taxon>Bacillati</taxon>
        <taxon>Cyanobacteriota</taxon>
        <taxon>Cyanophyceae</taxon>
        <taxon>Synechococcales</taxon>
        <taxon>Prochlorococcaceae</taxon>
        <taxon>Prochlorococcus</taxon>
    </lineage>
</organism>
<keyword id="KW-1185">Reference proteome</keyword>
<keyword id="KW-0687">Ribonucleoprotein</keyword>
<keyword id="KW-0689">Ribosomal protein</keyword>
<keyword id="KW-0694">RNA-binding</keyword>
<keyword id="KW-0699">rRNA-binding</keyword>
<keyword id="KW-0820">tRNA-binding</keyword>
<feature type="chain" id="PRO_0000243039" description="Large ribosomal subunit protein uL5">
    <location>
        <begin position="1"/>
        <end position="179"/>
    </location>
</feature>
<evidence type="ECO:0000255" key="1">
    <source>
        <dbReference type="HAMAP-Rule" id="MF_01333"/>
    </source>
</evidence>
<evidence type="ECO:0000305" key="2"/>